<name>BLAT_KLEOX</name>
<reference key="1">
    <citation type="journal article" date="1992" name="Antimicrob. Agents Chemother.">
        <title>Transposition of the gene encoding a TEM-12 extended-spectrum beta-lactamase.</title>
        <authorList>
            <person name="Heritage J."/>
            <person name="Hawkey P.M."/>
            <person name="Todd N."/>
            <person name="Lewis I.J."/>
        </authorList>
    </citation>
    <scope>NUCLEOTIDE SEQUENCE [GENOMIC DNA]</scope>
    <scope>FUNCTION IN RESISTANCE TO CEFTAZIDIME</scope>
    <source>
        <strain>0400-1</strain>
        <plasmid>pOZ201</plasmid>
        <transposon>Tn841</transposon>
    </source>
</reference>
<reference key="2">
    <citation type="journal article" date="1991" name="Biochem. J.">
        <title>A standard numbering scheme for the class A beta-lactamases.</title>
        <authorList>
            <person name="Ambler R.P."/>
            <person name="Coulson A.F."/>
            <person name="Frere J.M."/>
            <person name="Ghuysen J.M."/>
            <person name="Joris B."/>
            <person name="Forsman M."/>
            <person name="Levesque R.C."/>
            <person name="Tiraby G."/>
            <person name="Waley S.G."/>
        </authorList>
    </citation>
    <scope>AMINO ACID NUMBERING SCHEME</scope>
</reference>
<sequence>MSIQHFRVALIPFFAAFCLPVFAHPETLVKVKDAEDQLGARVGYIELDLNSGKILESFRPEERFPMMSTFKVLLCGAVLSRVDAGQEQLGRRIHYSQNDLVEYSPVTEKHLTDGMTVRELCSAAITMSDNTAANLLLTTIGGPKELTAFLHNMGDHVTRLDSWEPELNEAIPNDERDTTMPAAMATTLRKLLTGELLTLASRQQLIDWMEADKVAGPLLRSALPAGWFIADKSGAGERGSRGIIAALGPDGKPSRIVVIYTTGSQATMDERNRQIAEIGASLIKHW</sequence>
<evidence type="ECO:0000250" key="1"/>
<evidence type="ECO:0000255" key="2"/>
<evidence type="ECO:0000255" key="3">
    <source>
        <dbReference type="PROSITE-ProRule" id="PRU10101"/>
    </source>
</evidence>
<evidence type="ECO:0000269" key="4">
    <source>
    </source>
</evidence>
<evidence type="ECO:0000305" key="5"/>
<evidence type="ECO:0000305" key="6">
    <source>
    </source>
</evidence>
<proteinExistence type="evidence at protein level"/>
<comment type="function">
    <text evidence="4">TEM-type are the most prevalent beta-lactamases in enterobacteria; they hydrolyze the beta-lactam bond in susceptible beta-lactam antibiotics, thus conferring resistance to penicillins and cephalosporins such as ceftazidime.</text>
</comment>
<comment type="catalytic activity">
    <reaction evidence="3">
        <text>a beta-lactam + H2O = a substituted beta-amino acid</text>
        <dbReference type="Rhea" id="RHEA:20401"/>
        <dbReference type="ChEBI" id="CHEBI:15377"/>
        <dbReference type="ChEBI" id="CHEBI:35627"/>
        <dbReference type="ChEBI" id="CHEBI:140347"/>
        <dbReference type="EC" id="3.5.2.6"/>
    </reaction>
</comment>
<comment type="miscellaneous">
    <text evidence="6">The class A beta-lactamase family has a specific amino-acid numbering system, sometimes called Ambler or ABL numbering and often misspelt as Amber. A multiple sequence alignment was used to derive a consensus sequence and then the consensus was numbered taking into account insertions and deletions. This allows use of identical numbers, e.g. for active site residues, despite differences in protein length. UniProt always uses natural numbering of residues, hence there appear to be differences in numbering between this entry and some papers.</text>
</comment>
<comment type="similarity">
    <text evidence="5">Belongs to the class-A beta-lactamase family.</text>
</comment>
<accession>Q48406</accession>
<organism>
    <name type="scientific">Klebsiella oxytoca</name>
    <dbReference type="NCBI Taxonomy" id="571"/>
    <lineage>
        <taxon>Bacteria</taxon>
        <taxon>Pseudomonadati</taxon>
        <taxon>Pseudomonadota</taxon>
        <taxon>Gammaproteobacteria</taxon>
        <taxon>Enterobacterales</taxon>
        <taxon>Enterobacteriaceae</taxon>
        <taxon>Klebsiella/Raoultella group</taxon>
        <taxon>Klebsiella</taxon>
    </lineage>
</organism>
<dbReference type="EC" id="3.5.2.6"/>
<dbReference type="EMBL" id="M88143">
    <property type="protein sequence ID" value="AAA25053.1"/>
    <property type="molecule type" value="Genomic_DNA"/>
</dbReference>
<dbReference type="BMRB" id="Q48406"/>
<dbReference type="SMR" id="Q48406"/>
<dbReference type="CARD" id="ARO:3000884">
    <property type="molecule name" value="TEM-12"/>
    <property type="mechanism identifier" value="ARO:0001004"/>
    <property type="mechanism name" value="antibiotic inactivation"/>
</dbReference>
<dbReference type="KEGG" id="ag:AAA25053"/>
<dbReference type="GO" id="GO:0008800">
    <property type="term" value="F:beta-lactamase activity"/>
    <property type="evidence" value="ECO:0007669"/>
    <property type="project" value="UniProtKB-EC"/>
</dbReference>
<dbReference type="GO" id="GO:0030655">
    <property type="term" value="P:beta-lactam antibiotic catabolic process"/>
    <property type="evidence" value="ECO:0007669"/>
    <property type="project" value="InterPro"/>
</dbReference>
<dbReference type="GO" id="GO:0046677">
    <property type="term" value="P:response to antibiotic"/>
    <property type="evidence" value="ECO:0007669"/>
    <property type="project" value="UniProtKB-KW"/>
</dbReference>
<dbReference type="Gene3D" id="3.40.710.10">
    <property type="entry name" value="DD-peptidase/beta-lactamase superfamily"/>
    <property type="match status" value="1"/>
</dbReference>
<dbReference type="InterPro" id="IPR012338">
    <property type="entry name" value="Beta-lactam/transpept-like"/>
</dbReference>
<dbReference type="InterPro" id="IPR045155">
    <property type="entry name" value="Beta-lactam_cat"/>
</dbReference>
<dbReference type="InterPro" id="IPR000871">
    <property type="entry name" value="Beta-lactam_class-A"/>
</dbReference>
<dbReference type="InterPro" id="IPR023650">
    <property type="entry name" value="Beta-lactam_class-A_AS"/>
</dbReference>
<dbReference type="NCBIfam" id="NF033103">
    <property type="entry name" value="bla_class_A"/>
    <property type="match status" value="1"/>
</dbReference>
<dbReference type="NCBIfam" id="NF000531">
    <property type="entry name" value="blaTEM"/>
    <property type="match status" value="1"/>
</dbReference>
<dbReference type="PANTHER" id="PTHR35333">
    <property type="entry name" value="BETA-LACTAMASE"/>
    <property type="match status" value="1"/>
</dbReference>
<dbReference type="PANTHER" id="PTHR35333:SF3">
    <property type="entry name" value="BETA-LACTAMASE-TYPE TRANSPEPTIDASE FOLD CONTAINING PROTEIN"/>
    <property type="match status" value="1"/>
</dbReference>
<dbReference type="Pfam" id="PF13354">
    <property type="entry name" value="Beta-lactamase2"/>
    <property type="match status" value="1"/>
</dbReference>
<dbReference type="PRINTS" id="PR00118">
    <property type="entry name" value="BLACTAMASEA"/>
</dbReference>
<dbReference type="SUPFAM" id="SSF56601">
    <property type="entry name" value="beta-lactamase/transpeptidase-like"/>
    <property type="match status" value="1"/>
</dbReference>
<dbReference type="PROSITE" id="PS00146">
    <property type="entry name" value="BETA_LACTAMASE_A"/>
    <property type="match status" value="1"/>
</dbReference>
<gene>
    <name type="primary">blaT-12b</name>
</gene>
<feature type="signal peptide" evidence="2">
    <location>
        <begin position="1"/>
        <end position="23"/>
    </location>
</feature>
<feature type="chain" id="PRO_0000364051" description="Beta-lactamase TEM-12">
    <location>
        <begin position="24"/>
        <end position="286"/>
    </location>
</feature>
<feature type="active site" description="Acyl-ester intermediate" evidence="3">
    <location>
        <position position="68"/>
    </location>
</feature>
<feature type="active site" description="Proton acceptor" evidence="1">
    <location>
        <position position="166"/>
    </location>
</feature>
<feature type="binding site" evidence="1">
    <location>
        <begin position="232"/>
        <end position="234"/>
    </location>
    <ligand>
        <name>substrate</name>
    </ligand>
</feature>
<feature type="disulfide bond" evidence="1">
    <location>
        <begin position="75"/>
        <end position="121"/>
    </location>
</feature>
<keyword id="KW-0046">Antibiotic resistance</keyword>
<keyword id="KW-1015">Disulfide bond</keyword>
<keyword id="KW-0378">Hydrolase</keyword>
<keyword id="KW-0614">Plasmid</keyword>
<keyword id="KW-0732">Signal</keyword>
<geneLocation type="plasmid">
    <name>pOZ201</name>
</geneLocation>
<protein>
    <recommendedName>
        <fullName>Beta-lactamase TEM-12</fullName>
        <ecNumber>3.5.2.6</ecNumber>
    </recommendedName>
</protein>